<reference key="1">
    <citation type="journal article" date="2004" name="Science">
        <title>The Ashbya gossypii genome as a tool for mapping the ancient Saccharomyces cerevisiae genome.</title>
        <authorList>
            <person name="Dietrich F.S."/>
            <person name="Voegeli S."/>
            <person name="Brachat S."/>
            <person name="Lerch A."/>
            <person name="Gates K."/>
            <person name="Steiner S."/>
            <person name="Mohr C."/>
            <person name="Poehlmann R."/>
            <person name="Luedi P."/>
            <person name="Choi S."/>
            <person name="Wing R.A."/>
            <person name="Flavier A."/>
            <person name="Gaffney T.D."/>
            <person name="Philippsen P."/>
        </authorList>
    </citation>
    <scope>NUCLEOTIDE SEQUENCE [LARGE SCALE GENOMIC DNA]</scope>
    <source>
        <strain>ATCC 10895 / CBS 109.51 / FGSC 9923 / NRRL Y-1056</strain>
    </source>
</reference>
<reference key="2">
    <citation type="journal article" date="2013" name="G3 (Bethesda)">
        <title>Genomes of Ashbya fungi isolated from insects reveal four mating-type loci, numerous translocations, lack of transposons, and distinct gene duplications.</title>
        <authorList>
            <person name="Dietrich F.S."/>
            <person name="Voegeli S."/>
            <person name="Kuo S."/>
            <person name="Philippsen P."/>
        </authorList>
    </citation>
    <scope>GENOME REANNOTATION</scope>
    <source>
        <strain>ATCC 10895 / CBS 109.51 / FGSC 9923 / NRRL Y-1056</strain>
    </source>
</reference>
<organism>
    <name type="scientific">Eremothecium gossypii (strain ATCC 10895 / CBS 109.51 / FGSC 9923 / NRRL Y-1056)</name>
    <name type="common">Yeast</name>
    <name type="synonym">Ashbya gossypii</name>
    <dbReference type="NCBI Taxonomy" id="284811"/>
    <lineage>
        <taxon>Eukaryota</taxon>
        <taxon>Fungi</taxon>
        <taxon>Dikarya</taxon>
        <taxon>Ascomycota</taxon>
        <taxon>Saccharomycotina</taxon>
        <taxon>Saccharomycetes</taxon>
        <taxon>Saccharomycetales</taxon>
        <taxon>Saccharomycetaceae</taxon>
        <taxon>Eremothecium</taxon>
    </lineage>
</organism>
<gene>
    <name type="primary">RCF1</name>
    <name type="synonym">AIM31</name>
    <name type="ordered locus">AER310W</name>
</gene>
<comment type="function">
    <text evidence="1">Cytochrome c oxidase subunit which plays a role in assembly of respiratory supercomplexes.</text>
</comment>
<comment type="subunit">
    <text evidence="1">Associates with the respiratory chain complex III/complex IV supercomplex.</text>
</comment>
<comment type="subcellular location">
    <subcellularLocation>
        <location evidence="3">Mitochondrion membrane</location>
        <topology evidence="3">Multi-pass membrane protein</topology>
    </subcellularLocation>
</comment>
<comment type="similarity">
    <text evidence="5">Belongs to the RCF1 family.</text>
</comment>
<dbReference type="EMBL" id="AE016818">
    <property type="protein sequence ID" value="AAS52990.1"/>
    <property type="molecule type" value="Genomic_DNA"/>
</dbReference>
<dbReference type="RefSeq" id="NP_985166.1">
    <property type="nucleotide sequence ID" value="NM_210520.1"/>
</dbReference>
<dbReference type="SMR" id="Q756G1"/>
<dbReference type="FunCoup" id="Q756G1">
    <property type="interactions" value="107"/>
</dbReference>
<dbReference type="STRING" id="284811.Q756G1"/>
<dbReference type="EnsemblFungi" id="AAS52990">
    <property type="protein sequence ID" value="AAS52990"/>
    <property type="gene ID" value="AGOS_AER310W"/>
</dbReference>
<dbReference type="GeneID" id="4621379"/>
<dbReference type="KEGG" id="ago:AGOS_AER310W"/>
<dbReference type="eggNOG" id="KOG4431">
    <property type="taxonomic scope" value="Eukaryota"/>
</dbReference>
<dbReference type="HOGENOM" id="CLU_087356_1_0_1"/>
<dbReference type="InParanoid" id="Q756G1"/>
<dbReference type="OMA" id="QRWIREL"/>
<dbReference type="OrthoDB" id="6604018at2759"/>
<dbReference type="Proteomes" id="UP000000591">
    <property type="component" value="Chromosome V"/>
</dbReference>
<dbReference type="GO" id="GO:0005743">
    <property type="term" value="C:mitochondrial inner membrane"/>
    <property type="evidence" value="ECO:0007669"/>
    <property type="project" value="EnsemblFungi"/>
</dbReference>
<dbReference type="GO" id="GO:0005739">
    <property type="term" value="C:mitochondrion"/>
    <property type="evidence" value="ECO:0000318"/>
    <property type="project" value="GO_Central"/>
</dbReference>
<dbReference type="GO" id="GO:0098803">
    <property type="term" value="C:respiratory chain complex"/>
    <property type="evidence" value="ECO:0007669"/>
    <property type="project" value="EnsemblFungi"/>
</dbReference>
<dbReference type="GO" id="GO:0033617">
    <property type="term" value="P:mitochondrial cytochrome c oxidase assembly"/>
    <property type="evidence" value="ECO:0007669"/>
    <property type="project" value="EnsemblFungi"/>
</dbReference>
<dbReference type="GO" id="GO:0097250">
    <property type="term" value="P:mitochondrial respirasome assembly"/>
    <property type="evidence" value="ECO:0000318"/>
    <property type="project" value="GO_Central"/>
</dbReference>
<dbReference type="GO" id="GO:0010155">
    <property type="term" value="P:regulation of proton transport"/>
    <property type="evidence" value="ECO:0007669"/>
    <property type="project" value="EnsemblFungi"/>
</dbReference>
<dbReference type="Gene3D" id="6.10.140.1320">
    <property type="match status" value="1"/>
</dbReference>
<dbReference type="InterPro" id="IPR007667">
    <property type="entry name" value="Hypoxia_induced_domain"/>
</dbReference>
<dbReference type="InterPro" id="IPR050355">
    <property type="entry name" value="RCF1"/>
</dbReference>
<dbReference type="PANTHER" id="PTHR12297:SF3">
    <property type="entry name" value="HIG1 DOMAIN FAMILY MEMBER 1A"/>
    <property type="match status" value="1"/>
</dbReference>
<dbReference type="PANTHER" id="PTHR12297">
    <property type="entry name" value="HYPOXIA-INDUCBILE GENE 1 HIG1 -RELATED"/>
    <property type="match status" value="1"/>
</dbReference>
<dbReference type="Pfam" id="PF04588">
    <property type="entry name" value="HIG_1_N"/>
    <property type="match status" value="1"/>
</dbReference>
<dbReference type="PROSITE" id="PS51503">
    <property type="entry name" value="HIG1"/>
    <property type="match status" value="1"/>
</dbReference>
<name>RCF1_EREGS</name>
<feature type="chain" id="PRO_0000399614" description="Respiratory supercomplex factor 1, mitochondrial">
    <location>
        <begin position="1"/>
        <end position="157"/>
    </location>
</feature>
<feature type="transmembrane region" description="Helical" evidence="3">
    <location>
        <begin position="31"/>
        <end position="51"/>
    </location>
</feature>
<feature type="transmembrane region" description="Helical" evidence="3">
    <location>
        <begin position="67"/>
        <end position="87"/>
    </location>
</feature>
<feature type="domain" description="HIG1" evidence="3">
    <location>
        <begin position="4"/>
        <end position="95"/>
    </location>
</feature>
<feature type="region of interest" description="Disordered" evidence="4">
    <location>
        <begin position="120"/>
        <end position="157"/>
    </location>
</feature>
<feature type="coiled-coil region" evidence="2">
    <location>
        <begin position="87"/>
        <end position="157"/>
    </location>
</feature>
<feature type="compositionally biased region" description="Basic and acidic residues" evidence="4">
    <location>
        <begin position="120"/>
        <end position="135"/>
    </location>
</feature>
<feature type="compositionally biased region" description="Low complexity" evidence="4">
    <location>
        <begin position="136"/>
        <end position="145"/>
    </location>
</feature>
<feature type="compositionally biased region" description="Basic and acidic residues" evidence="4">
    <location>
        <begin position="146"/>
        <end position="157"/>
    </location>
</feature>
<sequence length="157" mass="18367">MSYLPTSSEADKDLDEMTFSEKMVFHCKREPLVPAGVLMTTGAILLAIKNVRSGNRRNAQKWFRWRVGLQTGTLVALIAGSFFYGSAKHEQLSKEEQLRQKAKMREQLWIQELERRDLEVRRRKQRAEEARKKAAEMQSELSGLEQELRELEESRRK</sequence>
<evidence type="ECO:0000250" key="1"/>
<evidence type="ECO:0000255" key="2"/>
<evidence type="ECO:0000255" key="3">
    <source>
        <dbReference type="PROSITE-ProRule" id="PRU00836"/>
    </source>
</evidence>
<evidence type="ECO:0000256" key="4">
    <source>
        <dbReference type="SAM" id="MobiDB-lite"/>
    </source>
</evidence>
<evidence type="ECO:0000305" key="5"/>
<proteinExistence type="inferred from homology"/>
<protein>
    <recommendedName>
        <fullName>Respiratory supercomplex factor 1, mitochondrial</fullName>
    </recommendedName>
</protein>
<accession>Q756G1</accession>
<keyword id="KW-0175">Coiled coil</keyword>
<keyword id="KW-0472">Membrane</keyword>
<keyword id="KW-0496">Mitochondrion</keyword>
<keyword id="KW-1185">Reference proteome</keyword>
<keyword id="KW-0812">Transmembrane</keyword>
<keyword id="KW-1133">Transmembrane helix</keyword>